<protein>
    <recommendedName>
        <fullName evidence="1">Nucleotide-binding protein SACOL0830</fullName>
    </recommendedName>
</protein>
<gene>
    <name type="ordered locus">SACOL0830</name>
</gene>
<organism>
    <name type="scientific">Staphylococcus aureus (strain COL)</name>
    <dbReference type="NCBI Taxonomy" id="93062"/>
    <lineage>
        <taxon>Bacteria</taxon>
        <taxon>Bacillati</taxon>
        <taxon>Bacillota</taxon>
        <taxon>Bacilli</taxon>
        <taxon>Bacillales</taxon>
        <taxon>Staphylococcaceae</taxon>
        <taxon>Staphylococcus</taxon>
    </lineage>
</organism>
<proteinExistence type="inferred from homology"/>
<keyword id="KW-0067">ATP-binding</keyword>
<keyword id="KW-0342">GTP-binding</keyword>
<keyword id="KW-0547">Nucleotide-binding</keyword>
<feature type="chain" id="PRO_0000107757" description="Nucleotide-binding protein SACOL0830">
    <location>
        <begin position="1"/>
        <end position="303"/>
    </location>
</feature>
<feature type="binding site" evidence="1">
    <location>
        <begin position="18"/>
        <end position="25"/>
    </location>
    <ligand>
        <name>ATP</name>
        <dbReference type="ChEBI" id="CHEBI:30616"/>
    </ligand>
</feature>
<feature type="binding site" evidence="1">
    <location>
        <begin position="69"/>
        <end position="72"/>
    </location>
    <ligand>
        <name>GTP</name>
        <dbReference type="ChEBI" id="CHEBI:37565"/>
    </ligand>
</feature>
<sequence length="303" mass="34812">MDNNEKEKSKSELLVVTGLSGAGKSLVIQCLEDMGYFCVDNLPPVLLPKFVELMEQGNPSLRKVAIAIDLRGKELFNSLVAVVDKVKSESDVIIDVMFLEASTEKLISRYKETRRAHPLMEQGKRSLINAINDEREHLSQIRSIANFVIDTTKLSPKELKERIRRYYEDEEFETFTINVTSFGFKHGIQMDADLVFDVRFLPNPYYVVDLRPLTGLDKDVYNYVMKWKETEIFFEKLTDLLDFMIPGYKKEGKSQLVIAIGCTGGQHRSVALAERLGNYLNEVFEYNVYVHHRDAHIESGEKK</sequence>
<accession>Q5HHQ3</accession>
<evidence type="ECO:0000255" key="1">
    <source>
        <dbReference type="HAMAP-Rule" id="MF_00636"/>
    </source>
</evidence>
<reference key="1">
    <citation type="journal article" date="2005" name="J. Bacteriol.">
        <title>Insights on evolution of virulence and resistance from the complete genome analysis of an early methicillin-resistant Staphylococcus aureus strain and a biofilm-producing methicillin-resistant Staphylococcus epidermidis strain.</title>
        <authorList>
            <person name="Gill S.R."/>
            <person name="Fouts D.E."/>
            <person name="Archer G.L."/>
            <person name="Mongodin E.F."/>
            <person name="DeBoy R.T."/>
            <person name="Ravel J."/>
            <person name="Paulsen I.T."/>
            <person name="Kolonay J.F."/>
            <person name="Brinkac L.M."/>
            <person name="Beanan M.J."/>
            <person name="Dodson R.J."/>
            <person name="Daugherty S.C."/>
            <person name="Madupu R."/>
            <person name="Angiuoli S.V."/>
            <person name="Durkin A.S."/>
            <person name="Haft D.H."/>
            <person name="Vamathevan J.J."/>
            <person name="Khouri H."/>
            <person name="Utterback T.R."/>
            <person name="Lee C."/>
            <person name="Dimitrov G."/>
            <person name="Jiang L."/>
            <person name="Qin H."/>
            <person name="Weidman J."/>
            <person name="Tran K."/>
            <person name="Kang K.H."/>
            <person name="Hance I.R."/>
            <person name="Nelson K.E."/>
            <person name="Fraser C.M."/>
        </authorList>
    </citation>
    <scope>NUCLEOTIDE SEQUENCE [LARGE SCALE GENOMIC DNA]</scope>
    <source>
        <strain>COL</strain>
    </source>
</reference>
<comment type="function">
    <text evidence="1">Displays ATPase and GTPase activities.</text>
</comment>
<comment type="similarity">
    <text evidence="1">Belongs to the RapZ-like family.</text>
</comment>
<dbReference type="EMBL" id="CP000046">
    <property type="protein sequence ID" value="AAW36386.1"/>
    <property type="molecule type" value="Genomic_DNA"/>
</dbReference>
<dbReference type="SMR" id="Q5HHQ3"/>
<dbReference type="KEGG" id="sac:SACOL0830"/>
<dbReference type="HOGENOM" id="CLU_059558_0_0_9"/>
<dbReference type="Proteomes" id="UP000000530">
    <property type="component" value="Chromosome"/>
</dbReference>
<dbReference type="GO" id="GO:0005524">
    <property type="term" value="F:ATP binding"/>
    <property type="evidence" value="ECO:0007669"/>
    <property type="project" value="UniProtKB-UniRule"/>
</dbReference>
<dbReference type="GO" id="GO:0005525">
    <property type="term" value="F:GTP binding"/>
    <property type="evidence" value="ECO:0007669"/>
    <property type="project" value="UniProtKB-UniRule"/>
</dbReference>
<dbReference type="Gene3D" id="3.40.50.300">
    <property type="entry name" value="P-loop containing nucleotide triphosphate hydrolases"/>
    <property type="match status" value="1"/>
</dbReference>
<dbReference type="HAMAP" id="MF_00636">
    <property type="entry name" value="RapZ_like"/>
    <property type="match status" value="1"/>
</dbReference>
<dbReference type="InterPro" id="IPR027417">
    <property type="entry name" value="P-loop_NTPase"/>
</dbReference>
<dbReference type="InterPro" id="IPR005337">
    <property type="entry name" value="RapZ-like"/>
</dbReference>
<dbReference type="InterPro" id="IPR053930">
    <property type="entry name" value="RapZ-like_N"/>
</dbReference>
<dbReference type="InterPro" id="IPR053931">
    <property type="entry name" value="RapZ_C"/>
</dbReference>
<dbReference type="NCBIfam" id="NF003828">
    <property type="entry name" value="PRK05416.1"/>
    <property type="match status" value="1"/>
</dbReference>
<dbReference type="PANTHER" id="PTHR30448">
    <property type="entry name" value="RNASE ADAPTER PROTEIN RAPZ"/>
    <property type="match status" value="1"/>
</dbReference>
<dbReference type="PANTHER" id="PTHR30448:SF0">
    <property type="entry name" value="RNASE ADAPTER PROTEIN RAPZ"/>
    <property type="match status" value="1"/>
</dbReference>
<dbReference type="Pfam" id="PF22740">
    <property type="entry name" value="PapZ_C"/>
    <property type="match status" value="1"/>
</dbReference>
<dbReference type="Pfam" id="PF03668">
    <property type="entry name" value="RapZ-like_N"/>
    <property type="match status" value="1"/>
</dbReference>
<dbReference type="PIRSF" id="PIRSF005052">
    <property type="entry name" value="P-loopkin"/>
    <property type="match status" value="1"/>
</dbReference>
<dbReference type="SUPFAM" id="SSF52540">
    <property type="entry name" value="P-loop containing nucleoside triphosphate hydrolases"/>
    <property type="match status" value="1"/>
</dbReference>
<name>Y830_STAAC</name>